<sequence>MQDDQKKTTDFGFKEIPTDEKVKAVAQVFHSVAAKYDIMNDLMSGGIHRLWKRHTISQSGVRAGNCVLDIAGGTGDLTVKFSRLVGSEGQVILADINDSMLKVGRDKLANQGIVGNVKFVQANAEALPFPDDTFDCITIAFGLRNVTDKSKALASMYRVLKPGGRLLVLEFSKPESELLSQVYDQYSFRLLPAMGKLIANDADSYRYLAESIRMHPDQETLKGMMDEVGFERTSYQNLTGGIVALHKGFKF</sequence>
<accession>A6VTA1</accession>
<organism>
    <name type="scientific">Marinomonas sp. (strain MWYL1)</name>
    <dbReference type="NCBI Taxonomy" id="400668"/>
    <lineage>
        <taxon>Bacteria</taxon>
        <taxon>Pseudomonadati</taxon>
        <taxon>Pseudomonadota</taxon>
        <taxon>Gammaproteobacteria</taxon>
        <taxon>Oceanospirillales</taxon>
        <taxon>Oceanospirillaceae</taxon>
        <taxon>Marinomonas</taxon>
    </lineage>
</organism>
<dbReference type="EC" id="2.1.1.163" evidence="1"/>
<dbReference type="EC" id="2.1.1.201" evidence="1"/>
<dbReference type="EMBL" id="CP000749">
    <property type="protein sequence ID" value="ABR69680.1"/>
    <property type="molecule type" value="Genomic_DNA"/>
</dbReference>
<dbReference type="SMR" id="A6VTA1"/>
<dbReference type="STRING" id="400668.Mmwyl1_0746"/>
<dbReference type="KEGG" id="mmw:Mmwyl1_0746"/>
<dbReference type="eggNOG" id="COG2226">
    <property type="taxonomic scope" value="Bacteria"/>
</dbReference>
<dbReference type="HOGENOM" id="CLU_037990_0_0_6"/>
<dbReference type="OrthoDB" id="9808140at2"/>
<dbReference type="UniPathway" id="UPA00079">
    <property type="reaction ID" value="UER00169"/>
</dbReference>
<dbReference type="UniPathway" id="UPA00232"/>
<dbReference type="GO" id="GO:0008425">
    <property type="term" value="F:2-methoxy-6-polyprenyl-1,4-benzoquinol methyltransferase activity"/>
    <property type="evidence" value="ECO:0007669"/>
    <property type="project" value="UniProtKB-UniRule"/>
</dbReference>
<dbReference type="GO" id="GO:0043770">
    <property type="term" value="F:demethylmenaquinone methyltransferase activity"/>
    <property type="evidence" value="ECO:0007669"/>
    <property type="project" value="UniProtKB-UniRule"/>
</dbReference>
<dbReference type="GO" id="GO:0009060">
    <property type="term" value="P:aerobic respiration"/>
    <property type="evidence" value="ECO:0007669"/>
    <property type="project" value="UniProtKB-UniRule"/>
</dbReference>
<dbReference type="GO" id="GO:0009234">
    <property type="term" value="P:menaquinone biosynthetic process"/>
    <property type="evidence" value="ECO:0007669"/>
    <property type="project" value="UniProtKB-UniRule"/>
</dbReference>
<dbReference type="GO" id="GO:0032259">
    <property type="term" value="P:methylation"/>
    <property type="evidence" value="ECO:0007669"/>
    <property type="project" value="UniProtKB-KW"/>
</dbReference>
<dbReference type="CDD" id="cd02440">
    <property type="entry name" value="AdoMet_MTases"/>
    <property type="match status" value="1"/>
</dbReference>
<dbReference type="FunFam" id="3.40.50.150:FF:000014">
    <property type="entry name" value="Ubiquinone/menaquinone biosynthesis C-methyltransferase UbiE"/>
    <property type="match status" value="1"/>
</dbReference>
<dbReference type="Gene3D" id="3.40.50.150">
    <property type="entry name" value="Vaccinia Virus protein VP39"/>
    <property type="match status" value="1"/>
</dbReference>
<dbReference type="HAMAP" id="MF_01813">
    <property type="entry name" value="MenG_UbiE_methyltr"/>
    <property type="match status" value="1"/>
</dbReference>
<dbReference type="InterPro" id="IPR029063">
    <property type="entry name" value="SAM-dependent_MTases_sf"/>
</dbReference>
<dbReference type="InterPro" id="IPR004033">
    <property type="entry name" value="UbiE/COQ5_MeTrFase"/>
</dbReference>
<dbReference type="InterPro" id="IPR023576">
    <property type="entry name" value="UbiE/COQ5_MeTrFase_CS"/>
</dbReference>
<dbReference type="NCBIfam" id="TIGR01934">
    <property type="entry name" value="MenG_MenH_UbiE"/>
    <property type="match status" value="1"/>
</dbReference>
<dbReference type="NCBIfam" id="NF001240">
    <property type="entry name" value="PRK00216.1-1"/>
    <property type="match status" value="1"/>
</dbReference>
<dbReference type="NCBIfam" id="NF001242">
    <property type="entry name" value="PRK00216.1-3"/>
    <property type="match status" value="1"/>
</dbReference>
<dbReference type="NCBIfam" id="NF001244">
    <property type="entry name" value="PRK00216.1-5"/>
    <property type="match status" value="1"/>
</dbReference>
<dbReference type="PANTHER" id="PTHR43591:SF24">
    <property type="entry name" value="2-METHOXY-6-POLYPRENYL-1,4-BENZOQUINOL METHYLASE, MITOCHONDRIAL"/>
    <property type="match status" value="1"/>
</dbReference>
<dbReference type="PANTHER" id="PTHR43591">
    <property type="entry name" value="METHYLTRANSFERASE"/>
    <property type="match status" value="1"/>
</dbReference>
<dbReference type="Pfam" id="PF01209">
    <property type="entry name" value="Ubie_methyltran"/>
    <property type="match status" value="1"/>
</dbReference>
<dbReference type="SUPFAM" id="SSF53335">
    <property type="entry name" value="S-adenosyl-L-methionine-dependent methyltransferases"/>
    <property type="match status" value="1"/>
</dbReference>
<dbReference type="PROSITE" id="PS51608">
    <property type="entry name" value="SAM_MT_UBIE"/>
    <property type="match status" value="1"/>
</dbReference>
<dbReference type="PROSITE" id="PS01183">
    <property type="entry name" value="UBIE_1"/>
    <property type="match status" value="1"/>
</dbReference>
<dbReference type="PROSITE" id="PS01184">
    <property type="entry name" value="UBIE_2"/>
    <property type="match status" value="1"/>
</dbReference>
<gene>
    <name evidence="1" type="primary">ubiE</name>
    <name type="ordered locus">Mmwyl1_0746</name>
</gene>
<reference key="1">
    <citation type="submission" date="2007-06" db="EMBL/GenBank/DDBJ databases">
        <title>Complete sequence of Marinomonas sp. MWYL1.</title>
        <authorList>
            <consortium name="US DOE Joint Genome Institute"/>
            <person name="Copeland A."/>
            <person name="Lucas S."/>
            <person name="Lapidus A."/>
            <person name="Barry K."/>
            <person name="Glavina del Rio T."/>
            <person name="Dalin E."/>
            <person name="Tice H."/>
            <person name="Pitluck S."/>
            <person name="Kiss H."/>
            <person name="Brettin T."/>
            <person name="Bruce D."/>
            <person name="Detter J.C."/>
            <person name="Han C."/>
            <person name="Schmutz J."/>
            <person name="Larimer F."/>
            <person name="Land M."/>
            <person name="Hauser L."/>
            <person name="Kyrpides N."/>
            <person name="Kim E."/>
            <person name="Johnston A.W.B."/>
            <person name="Todd J.D."/>
            <person name="Rogers R."/>
            <person name="Wexler M."/>
            <person name="Bond P.L."/>
            <person name="Li Y."/>
            <person name="Richardson P."/>
        </authorList>
    </citation>
    <scope>NUCLEOTIDE SEQUENCE [LARGE SCALE GENOMIC DNA]</scope>
    <source>
        <strain>MWYL1</strain>
    </source>
</reference>
<proteinExistence type="inferred from homology"/>
<name>UBIE_MARMS</name>
<feature type="chain" id="PRO_1000088284" description="Ubiquinone/menaquinone biosynthesis C-methyltransferase UbiE">
    <location>
        <begin position="1"/>
        <end position="251"/>
    </location>
</feature>
<feature type="binding site" evidence="1">
    <location>
        <position position="74"/>
    </location>
    <ligand>
        <name>S-adenosyl-L-methionine</name>
        <dbReference type="ChEBI" id="CHEBI:59789"/>
    </ligand>
</feature>
<feature type="binding site" evidence="1">
    <location>
        <position position="95"/>
    </location>
    <ligand>
        <name>S-adenosyl-L-methionine</name>
        <dbReference type="ChEBI" id="CHEBI:59789"/>
    </ligand>
</feature>
<feature type="binding site" evidence="1">
    <location>
        <begin position="123"/>
        <end position="124"/>
    </location>
    <ligand>
        <name>S-adenosyl-L-methionine</name>
        <dbReference type="ChEBI" id="CHEBI:59789"/>
    </ligand>
</feature>
<comment type="function">
    <text evidence="1">Methyltransferase required for the conversion of demethylmenaquinol (DMKH2) to menaquinol (MKH2) and the conversion of 2-polyprenyl-6-methoxy-1,4-benzoquinol (DDMQH2) to 2-polyprenyl-3-methyl-6-methoxy-1,4-benzoquinol (DMQH2).</text>
</comment>
<comment type="catalytic activity">
    <reaction evidence="1">
        <text>a 2-demethylmenaquinol + S-adenosyl-L-methionine = a menaquinol + S-adenosyl-L-homocysteine + H(+)</text>
        <dbReference type="Rhea" id="RHEA:42640"/>
        <dbReference type="Rhea" id="RHEA-COMP:9539"/>
        <dbReference type="Rhea" id="RHEA-COMP:9563"/>
        <dbReference type="ChEBI" id="CHEBI:15378"/>
        <dbReference type="ChEBI" id="CHEBI:18151"/>
        <dbReference type="ChEBI" id="CHEBI:55437"/>
        <dbReference type="ChEBI" id="CHEBI:57856"/>
        <dbReference type="ChEBI" id="CHEBI:59789"/>
        <dbReference type="EC" id="2.1.1.163"/>
    </reaction>
</comment>
<comment type="catalytic activity">
    <reaction evidence="1">
        <text>a 2-methoxy-6-(all-trans-polyprenyl)benzene-1,4-diol + S-adenosyl-L-methionine = a 5-methoxy-2-methyl-3-(all-trans-polyprenyl)benzene-1,4-diol + S-adenosyl-L-homocysteine + H(+)</text>
        <dbReference type="Rhea" id="RHEA:28286"/>
        <dbReference type="Rhea" id="RHEA-COMP:10858"/>
        <dbReference type="Rhea" id="RHEA-COMP:10859"/>
        <dbReference type="ChEBI" id="CHEBI:15378"/>
        <dbReference type="ChEBI" id="CHEBI:57856"/>
        <dbReference type="ChEBI" id="CHEBI:59789"/>
        <dbReference type="ChEBI" id="CHEBI:84166"/>
        <dbReference type="ChEBI" id="CHEBI:84167"/>
        <dbReference type="EC" id="2.1.1.201"/>
    </reaction>
</comment>
<comment type="pathway">
    <text evidence="1">Quinol/quinone metabolism; menaquinone biosynthesis; menaquinol from 1,4-dihydroxy-2-naphthoate: step 2/2.</text>
</comment>
<comment type="pathway">
    <text evidence="1">Cofactor biosynthesis; ubiquinone biosynthesis.</text>
</comment>
<comment type="similarity">
    <text evidence="1">Belongs to the class I-like SAM-binding methyltransferase superfamily. MenG/UbiE family.</text>
</comment>
<keyword id="KW-0474">Menaquinone biosynthesis</keyword>
<keyword id="KW-0489">Methyltransferase</keyword>
<keyword id="KW-0949">S-adenosyl-L-methionine</keyword>
<keyword id="KW-0808">Transferase</keyword>
<keyword id="KW-0831">Ubiquinone biosynthesis</keyword>
<protein>
    <recommendedName>
        <fullName evidence="1">Ubiquinone/menaquinone biosynthesis C-methyltransferase UbiE</fullName>
        <ecNumber evidence="1">2.1.1.163</ecNumber>
        <ecNumber evidence="1">2.1.1.201</ecNumber>
    </recommendedName>
    <alternativeName>
        <fullName evidence="1">2-methoxy-6-polyprenyl-1,4-benzoquinol methylase</fullName>
    </alternativeName>
    <alternativeName>
        <fullName evidence="1">Demethylmenaquinone methyltransferase</fullName>
    </alternativeName>
</protein>
<evidence type="ECO:0000255" key="1">
    <source>
        <dbReference type="HAMAP-Rule" id="MF_01813"/>
    </source>
</evidence>